<organism>
    <name type="scientific">Shewanella woodyi (strain ATCC 51908 / MS32)</name>
    <dbReference type="NCBI Taxonomy" id="392500"/>
    <lineage>
        <taxon>Bacteria</taxon>
        <taxon>Pseudomonadati</taxon>
        <taxon>Pseudomonadota</taxon>
        <taxon>Gammaproteobacteria</taxon>
        <taxon>Alteromonadales</taxon>
        <taxon>Shewanellaceae</taxon>
        <taxon>Shewanella</taxon>
    </lineage>
</organism>
<dbReference type="EMBL" id="CP000961">
    <property type="protein sequence ID" value="ACA88928.1"/>
    <property type="molecule type" value="Genomic_DNA"/>
</dbReference>
<dbReference type="RefSeq" id="WP_012327251.1">
    <property type="nucleotide sequence ID" value="NC_010506.1"/>
</dbReference>
<dbReference type="SMR" id="B1KMX1"/>
<dbReference type="STRING" id="392500.Swoo_4678"/>
<dbReference type="KEGG" id="swd:Swoo_4678"/>
<dbReference type="eggNOG" id="COG0094">
    <property type="taxonomic scope" value="Bacteria"/>
</dbReference>
<dbReference type="HOGENOM" id="CLU_061015_2_1_6"/>
<dbReference type="Proteomes" id="UP000002168">
    <property type="component" value="Chromosome"/>
</dbReference>
<dbReference type="GO" id="GO:1990904">
    <property type="term" value="C:ribonucleoprotein complex"/>
    <property type="evidence" value="ECO:0007669"/>
    <property type="project" value="UniProtKB-KW"/>
</dbReference>
<dbReference type="GO" id="GO:0005840">
    <property type="term" value="C:ribosome"/>
    <property type="evidence" value="ECO:0007669"/>
    <property type="project" value="UniProtKB-KW"/>
</dbReference>
<dbReference type="GO" id="GO:0019843">
    <property type="term" value="F:rRNA binding"/>
    <property type="evidence" value="ECO:0007669"/>
    <property type="project" value="UniProtKB-UniRule"/>
</dbReference>
<dbReference type="GO" id="GO:0003735">
    <property type="term" value="F:structural constituent of ribosome"/>
    <property type="evidence" value="ECO:0007669"/>
    <property type="project" value="InterPro"/>
</dbReference>
<dbReference type="GO" id="GO:0000049">
    <property type="term" value="F:tRNA binding"/>
    <property type="evidence" value="ECO:0007669"/>
    <property type="project" value="UniProtKB-UniRule"/>
</dbReference>
<dbReference type="GO" id="GO:0006412">
    <property type="term" value="P:translation"/>
    <property type="evidence" value="ECO:0007669"/>
    <property type="project" value="UniProtKB-UniRule"/>
</dbReference>
<dbReference type="FunFam" id="3.30.1440.10:FF:000001">
    <property type="entry name" value="50S ribosomal protein L5"/>
    <property type="match status" value="1"/>
</dbReference>
<dbReference type="Gene3D" id="3.30.1440.10">
    <property type="match status" value="1"/>
</dbReference>
<dbReference type="HAMAP" id="MF_01333_B">
    <property type="entry name" value="Ribosomal_uL5_B"/>
    <property type="match status" value="1"/>
</dbReference>
<dbReference type="InterPro" id="IPR002132">
    <property type="entry name" value="Ribosomal_uL5"/>
</dbReference>
<dbReference type="InterPro" id="IPR020930">
    <property type="entry name" value="Ribosomal_uL5_bac-type"/>
</dbReference>
<dbReference type="InterPro" id="IPR031309">
    <property type="entry name" value="Ribosomal_uL5_C"/>
</dbReference>
<dbReference type="InterPro" id="IPR020929">
    <property type="entry name" value="Ribosomal_uL5_CS"/>
</dbReference>
<dbReference type="InterPro" id="IPR022803">
    <property type="entry name" value="Ribosomal_uL5_dom_sf"/>
</dbReference>
<dbReference type="InterPro" id="IPR031310">
    <property type="entry name" value="Ribosomal_uL5_N"/>
</dbReference>
<dbReference type="NCBIfam" id="NF000585">
    <property type="entry name" value="PRK00010.1"/>
    <property type="match status" value="1"/>
</dbReference>
<dbReference type="PANTHER" id="PTHR11994">
    <property type="entry name" value="60S RIBOSOMAL PROTEIN L11-RELATED"/>
    <property type="match status" value="1"/>
</dbReference>
<dbReference type="Pfam" id="PF00281">
    <property type="entry name" value="Ribosomal_L5"/>
    <property type="match status" value="1"/>
</dbReference>
<dbReference type="Pfam" id="PF00673">
    <property type="entry name" value="Ribosomal_L5_C"/>
    <property type="match status" value="1"/>
</dbReference>
<dbReference type="PIRSF" id="PIRSF002161">
    <property type="entry name" value="Ribosomal_L5"/>
    <property type="match status" value="1"/>
</dbReference>
<dbReference type="SUPFAM" id="SSF55282">
    <property type="entry name" value="RL5-like"/>
    <property type="match status" value="1"/>
</dbReference>
<dbReference type="PROSITE" id="PS00358">
    <property type="entry name" value="RIBOSOMAL_L5"/>
    <property type="match status" value="1"/>
</dbReference>
<reference key="1">
    <citation type="submission" date="2008-02" db="EMBL/GenBank/DDBJ databases">
        <title>Complete sequence of Shewanella woodyi ATCC 51908.</title>
        <authorList>
            <consortium name="US DOE Joint Genome Institute"/>
            <person name="Copeland A."/>
            <person name="Lucas S."/>
            <person name="Lapidus A."/>
            <person name="Glavina del Rio T."/>
            <person name="Dalin E."/>
            <person name="Tice H."/>
            <person name="Bruce D."/>
            <person name="Goodwin L."/>
            <person name="Pitluck S."/>
            <person name="Sims D."/>
            <person name="Brettin T."/>
            <person name="Detter J.C."/>
            <person name="Han C."/>
            <person name="Kuske C.R."/>
            <person name="Schmutz J."/>
            <person name="Larimer F."/>
            <person name="Land M."/>
            <person name="Hauser L."/>
            <person name="Kyrpides N."/>
            <person name="Lykidis A."/>
            <person name="Zhao J.-S."/>
            <person name="Richardson P."/>
        </authorList>
    </citation>
    <scope>NUCLEOTIDE SEQUENCE [LARGE SCALE GENOMIC DNA]</scope>
    <source>
        <strain>ATCC 51908 / MS32</strain>
    </source>
</reference>
<feature type="chain" id="PRO_1000142451" description="Large ribosomal subunit protein uL5">
    <location>
        <begin position="1"/>
        <end position="179"/>
    </location>
</feature>
<proteinExistence type="inferred from homology"/>
<accession>B1KMX1</accession>
<sequence>MAKLHDKYQETVSPELQKKFGFTSVMQVPRIEKITLNMGVGEAVADKKVMEHALRDMTAIAGQKPVVTVARKSVAGFKIREGYPIGCKVTLRGERMWEFLERLVDIAIPRIRDFRGMSTKSFDGRGNYAMGVREQIIFPEIQYDKIDKIRGMDIVITTSAKNDEEGRALLEAFNFPFKK</sequence>
<evidence type="ECO:0000255" key="1">
    <source>
        <dbReference type="HAMAP-Rule" id="MF_01333"/>
    </source>
</evidence>
<evidence type="ECO:0000305" key="2"/>
<gene>
    <name evidence="1" type="primary">rplE</name>
    <name type="ordered locus">Swoo_4678</name>
</gene>
<comment type="function">
    <text evidence="1">This is one of the proteins that bind and probably mediate the attachment of the 5S RNA into the large ribosomal subunit, where it forms part of the central protuberance. In the 70S ribosome it contacts protein S13 of the 30S subunit (bridge B1b), connecting the 2 subunits; this bridge is implicated in subunit movement. Contacts the P site tRNA; the 5S rRNA and some of its associated proteins might help stabilize positioning of ribosome-bound tRNAs.</text>
</comment>
<comment type="subunit">
    <text evidence="1">Part of the 50S ribosomal subunit; part of the 5S rRNA/L5/L18/L25 subcomplex. Contacts the 5S rRNA and the P site tRNA. Forms a bridge to the 30S subunit in the 70S ribosome.</text>
</comment>
<comment type="similarity">
    <text evidence="1">Belongs to the universal ribosomal protein uL5 family.</text>
</comment>
<protein>
    <recommendedName>
        <fullName evidence="1">Large ribosomal subunit protein uL5</fullName>
    </recommendedName>
    <alternativeName>
        <fullName evidence="2">50S ribosomal protein L5</fullName>
    </alternativeName>
</protein>
<name>RL5_SHEWM</name>
<keyword id="KW-1185">Reference proteome</keyword>
<keyword id="KW-0687">Ribonucleoprotein</keyword>
<keyword id="KW-0689">Ribosomal protein</keyword>
<keyword id="KW-0694">RNA-binding</keyword>
<keyword id="KW-0699">rRNA-binding</keyword>
<keyword id="KW-0820">tRNA-binding</keyword>